<evidence type="ECO:0000250" key="1"/>
<evidence type="ECO:0000255" key="2"/>
<evidence type="ECO:0000269" key="3">
    <source>
    </source>
</evidence>
<evidence type="ECO:0000303" key="4">
    <source>
    </source>
</evidence>
<evidence type="ECO:0000305" key="5"/>
<evidence type="ECO:0000305" key="6">
    <source>
    </source>
</evidence>
<evidence type="ECO:0000312" key="7">
    <source>
        <dbReference type="MGI" id="MGI:1306818"/>
    </source>
</evidence>
<proteinExistence type="evidence at protein level"/>
<accession>P56656</accession>
<accession>B9EIA6</accession>
<accession>G5E854</accession>
<dbReference type="EC" id="1.14.14.1" evidence="3"/>
<dbReference type="EMBL" id="AF047726">
    <property type="protein sequence ID" value="AAD13721.1"/>
    <property type="molecule type" value="mRNA"/>
</dbReference>
<dbReference type="EMBL" id="AC117790">
    <property type="status" value="NOT_ANNOTATED_CDS"/>
    <property type="molecule type" value="Genomic_DNA"/>
</dbReference>
<dbReference type="EMBL" id="AC139233">
    <property type="status" value="NOT_ANNOTATED_CDS"/>
    <property type="molecule type" value="Genomic_DNA"/>
</dbReference>
<dbReference type="EMBL" id="CH466534">
    <property type="protein sequence ID" value="EDL41819.1"/>
    <property type="molecule type" value="Genomic_DNA"/>
</dbReference>
<dbReference type="EMBL" id="BC139290">
    <property type="protein sequence ID" value="AAI39291.1"/>
    <property type="molecule type" value="mRNA"/>
</dbReference>
<dbReference type="EMBL" id="BC139291">
    <property type="protein sequence ID" value="AAI39292.1"/>
    <property type="molecule type" value="mRNA"/>
</dbReference>
<dbReference type="CCDS" id="CCDS29795.1"/>
<dbReference type="RefSeq" id="NP_034133.2">
    <property type="nucleotide sequence ID" value="NM_010003.2"/>
</dbReference>
<dbReference type="SMR" id="P56656"/>
<dbReference type="FunCoup" id="P56656">
    <property type="interactions" value="1004"/>
</dbReference>
<dbReference type="STRING" id="10090.ENSMUSP00000025968"/>
<dbReference type="SwissLipids" id="SLP:000001670"/>
<dbReference type="GlyGen" id="P56656">
    <property type="glycosylation" value="1 site"/>
</dbReference>
<dbReference type="iPTMnet" id="P56656"/>
<dbReference type="PhosphoSitePlus" id="P56656"/>
<dbReference type="SwissPalm" id="P56656"/>
<dbReference type="jPOST" id="P56656"/>
<dbReference type="PaxDb" id="10090-ENSMUSP00000025968"/>
<dbReference type="PeptideAtlas" id="P56656"/>
<dbReference type="ProteomicsDB" id="283809"/>
<dbReference type="DNASU" id="13098"/>
<dbReference type="Ensembl" id="ENSMUST00000025968.5">
    <property type="protein sequence ID" value="ENSMUSP00000025968.5"/>
    <property type="gene ID" value="ENSMUSG00000025003.7"/>
</dbReference>
<dbReference type="GeneID" id="13098"/>
<dbReference type="KEGG" id="mmu:13098"/>
<dbReference type="UCSC" id="uc008hkb.2">
    <property type="organism name" value="mouse"/>
</dbReference>
<dbReference type="AGR" id="MGI:1306818"/>
<dbReference type="CTD" id="13098"/>
<dbReference type="MGI" id="MGI:1306818">
    <property type="gene designation" value="Cyp2c39"/>
</dbReference>
<dbReference type="VEuPathDB" id="HostDB:ENSMUSG00000025003"/>
<dbReference type="eggNOG" id="KOG0156">
    <property type="taxonomic scope" value="Eukaryota"/>
</dbReference>
<dbReference type="GeneTree" id="ENSGT00940000155736"/>
<dbReference type="HOGENOM" id="CLU_001570_22_3_1"/>
<dbReference type="InParanoid" id="P56656"/>
<dbReference type="OMA" id="HTTKMVL"/>
<dbReference type="OrthoDB" id="1103324at2759"/>
<dbReference type="PhylomeDB" id="P56656"/>
<dbReference type="TreeFam" id="TF352043"/>
<dbReference type="SABIO-RK" id="P56656"/>
<dbReference type="UniPathway" id="UPA00383"/>
<dbReference type="BioGRID-ORCS" id="13098">
    <property type="hits" value="1 hit in 76 CRISPR screens"/>
</dbReference>
<dbReference type="PRO" id="PR:P56656"/>
<dbReference type="Proteomes" id="UP000000589">
    <property type="component" value="Chromosome 19"/>
</dbReference>
<dbReference type="RNAct" id="P56656">
    <property type="molecule type" value="protein"/>
</dbReference>
<dbReference type="Bgee" id="ENSMUSG00000025003">
    <property type="expression patterns" value="Expressed in liver and 1 other cell type or tissue"/>
</dbReference>
<dbReference type="GO" id="GO:0005789">
    <property type="term" value="C:endoplasmic reticulum membrane"/>
    <property type="evidence" value="ECO:0007669"/>
    <property type="project" value="UniProtKB-SubCell"/>
</dbReference>
<dbReference type="GO" id="GO:0008405">
    <property type="term" value="F:arachidonate 11,12-epoxygenase activity"/>
    <property type="evidence" value="ECO:0000314"/>
    <property type="project" value="UniProtKB"/>
</dbReference>
<dbReference type="GO" id="GO:0008404">
    <property type="term" value="F:arachidonate 14,15-epoxygenase activity"/>
    <property type="evidence" value="ECO:0007669"/>
    <property type="project" value="RHEA"/>
</dbReference>
<dbReference type="GO" id="GO:0020037">
    <property type="term" value="F:heme binding"/>
    <property type="evidence" value="ECO:0007669"/>
    <property type="project" value="InterPro"/>
</dbReference>
<dbReference type="GO" id="GO:0005506">
    <property type="term" value="F:iron ion binding"/>
    <property type="evidence" value="ECO:0007669"/>
    <property type="project" value="InterPro"/>
</dbReference>
<dbReference type="GO" id="GO:0016712">
    <property type="term" value="F:oxidoreductase activity, acting on paired donors, with incorporation or reduction of molecular oxygen, reduced flavin or flavoprotein as one donor, and incorporation of one atom of oxygen"/>
    <property type="evidence" value="ECO:0007669"/>
    <property type="project" value="UniProtKB-EC"/>
</dbReference>
<dbReference type="GO" id="GO:0019369">
    <property type="term" value="P:arachidonate metabolic process"/>
    <property type="evidence" value="ECO:0000314"/>
    <property type="project" value="UniProtKB"/>
</dbReference>
<dbReference type="CDD" id="cd20665">
    <property type="entry name" value="CYP2C-like"/>
    <property type="match status" value="1"/>
</dbReference>
<dbReference type="FunFam" id="1.10.630.10:FF:000299">
    <property type="entry name" value="Cytochrome P450 2C9"/>
    <property type="match status" value="1"/>
</dbReference>
<dbReference type="Gene3D" id="1.10.630.10">
    <property type="entry name" value="Cytochrome P450"/>
    <property type="match status" value="1"/>
</dbReference>
<dbReference type="InterPro" id="IPR001128">
    <property type="entry name" value="Cyt_P450"/>
</dbReference>
<dbReference type="InterPro" id="IPR017972">
    <property type="entry name" value="Cyt_P450_CS"/>
</dbReference>
<dbReference type="InterPro" id="IPR002401">
    <property type="entry name" value="Cyt_P450_E_grp-I"/>
</dbReference>
<dbReference type="InterPro" id="IPR036396">
    <property type="entry name" value="Cyt_P450_sf"/>
</dbReference>
<dbReference type="InterPro" id="IPR050182">
    <property type="entry name" value="Cytochrome_P450_fam2"/>
</dbReference>
<dbReference type="PANTHER" id="PTHR24300:SF384">
    <property type="entry name" value="CYTOCHROME P450 2C29-RELATED"/>
    <property type="match status" value="1"/>
</dbReference>
<dbReference type="PANTHER" id="PTHR24300">
    <property type="entry name" value="CYTOCHROME P450 508A4-RELATED"/>
    <property type="match status" value="1"/>
</dbReference>
<dbReference type="Pfam" id="PF00067">
    <property type="entry name" value="p450"/>
    <property type="match status" value="1"/>
</dbReference>
<dbReference type="PRINTS" id="PR00463">
    <property type="entry name" value="EP450I"/>
</dbReference>
<dbReference type="PRINTS" id="PR00385">
    <property type="entry name" value="P450"/>
</dbReference>
<dbReference type="SUPFAM" id="SSF48264">
    <property type="entry name" value="Cytochrome P450"/>
    <property type="match status" value="1"/>
</dbReference>
<dbReference type="PROSITE" id="PS00086">
    <property type="entry name" value="CYTOCHROME_P450"/>
    <property type="match status" value="1"/>
</dbReference>
<comment type="function">
    <text evidence="3">A cytochrome P450 monooxygenase that primarily catalyzes the epoxidation of 11,12 and 14,15 double bonds of (5Z,8Z,11Z,14Z)-eicosatetraenoic acid (arachidonate) forming 11,12- and 14,15-epoxyeicosatrienoic acids (11,12- and 14,15-EET) regioisomers. Mechanistically, uses molecular oxygen inserting one oxygen atom into a substrate, and reducing the second into a water molecule, with two electrons provided by NADPH via cytochrome P450 reductase (CPR; NADPH--hemoprotein reductase).</text>
</comment>
<comment type="catalytic activity">
    <reaction evidence="3">
        <text>an organic molecule + reduced [NADPH--hemoprotein reductase] + O2 = an alcohol + oxidized [NADPH--hemoprotein reductase] + H2O + H(+)</text>
        <dbReference type="Rhea" id="RHEA:17149"/>
        <dbReference type="Rhea" id="RHEA-COMP:11964"/>
        <dbReference type="Rhea" id="RHEA-COMP:11965"/>
        <dbReference type="ChEBI" id="CHEBI:15377"/>
        <dbReference type="ChEBI" id="CHEBI:15378"/>
        <dbReference type="ChEBI" id="CHEBI:15379"/>
        <dbReference type="ChEBI" id="CHEBI:30879"/>
        <dbReference type="ChEBI" id="CHEBI:57618"/>
        <dbReference type="ChEBI" id="CHEBI:58210"/>
        <dbReference type="ChEBI" id="CHEBI:142491"/>
        <dbReference type="EC" id="1.14.14.1"/>
    </reaction>
    <physiologicalReaction direction="left-to-right" evidence="6">
        <dbReference type="Rhea" id="RHEA:17150"/>
    </physiologicalReaction>
</comment>
<comment type="catalytic activity">
    <reaction evidence="3">
        <text>(5Z,8Z,11Z,14Z)-eicosatetraenoate + reduced [NADPH--hemoprotein reductase] + O2 = 11,12-epoxy-(5Z,8Z,14Z)-eicosatrienoate + oxidized [NADPH--hemoprotein reductase] + H2O + H(+)</text>
        <dbReference type="Rhea" id="RHEA:51480"/>
        <dbReference type="Rhea" id="RHEA-COMP:11964"/>
        <dbReference type="Rhea" id="RHEA-COMP:11965"/>
        <dbReference type="ChEBI" id="CHEBI:15377"/>
        <dbReference type="ChEBI" id="CHEBI:15378"/>
        <dbReference type="ChEBI" id="CHEBI:15379"/>
        <dbReference type="ChEBI" id="CHEBI:32395"/>
        <dbReference type="ChEBI" id="CHEBI:57618"/>
        <dbReference type="ChEBI" id="CHEBI:58210"/>
        <dbReference type="ChEBI" id="CHEBI:76625"/>
    </reaction>
    <physiologicalReaction direction="left-to-right" evidence="6">
        <dbReference type="Rhea" id="RHEA:51481"/>
    </physiologicalReaction>
</comment>
<comment type="catalytic activity">
    <reaction evidence="3">
        <text>(5Z,8Z,11Z,14Z)-eicosatetraenoate + reduced [NADPH--hemoprotein reductase] + O2 = 14,15-epoxy-(5Z,8Z,11Z)-eicosatrienoate + oxidized [NADPH--hemoprotein reductase] + H2O + H(+)</text>
        <dbReference type="Rhea" id="RHEA:51472"/>
        <dbReference type="Rhea" id="RHEA-COMP:11964"/>
        <dbReference type="Rhea" id="RHEA-COMP:11965"/>
        <dbReference type="ChEBI" id="CHEBI:15377"/>
        <dbReference type="ChEBI" id="CHEBI:15378"/>
        <dbReference type="ChEBI" id="CHEBI:15379"/>
        <dbReference type="ChEBI" id="CHEBI:32395"/>
        <dbReference type="ChEBI" id="CHEBI:57618"/>
        <dbReference type="ChEBI" id="CHEBI:58210"/>
        <dbReference type="ChEBI" id="CHEBI:84024"/>
    </reaction>
    <physiologicalReaction direction="left-to-right" evidence="6">
        <dbReference type="Rhea" id="RHEA:51473"/>
    </physiologicalReaction>
</comment>
<comment type="cofactor">
    <cofactor evidence="1">
        <name>heme</name>
        <dbReference type="ChEBI" id="CHEBI:30413"/>
    </cofactor>
</comment>
<comment type="pathway">
    <text evidence="6">Lipid metabolism; arachidonate metabolism.</text>
</comment>
<comment type="subcellular location">
    <subcellularLocation>
        <location>Endoplasmic reticulum membrane</location>
        <topology>Peripheral membrane protein</topology>
    </subcellularLocation>
    <subcellularLocation>
        <location>Microsome membrane</location>
        <topology>Peripheral membrane protein</topology>
    </subcellularLocation>
</comment>
<comment type="tissue specificity">
    <text evidence="3">Liver.</text>
</comment>
<comment type="induction">
    <text>P450 can be induced to high levels in liver and other tissues by various foreign compounds, including drugs, pesticides, and carcinogens.</text>
</comment>
<comment type="similarity">
    <text evidence="5">Belongs to the cytochrome P450 family.</text>
</comment>
<organism>
    <name type="scientific">Mus musculus</name>
    <name type="common">Mouse</name>
    <dbReference type="NCBI Taxonomy" id="10090"/>
    <lineage>
        <taxon>Eukaryota</taxon>
        <taxon>Metazoa</taxon>
        <taxon>Chordata</taxon>
        <taxon>Craniata</taxon>
        <taxon>Vertebrata</taxon>
        <taxon>Euteleostomi</taxon>
        <taxon>Mammalia</taxon>
        <taxon>Eutheria</taxon>
        <taxon>Euarchontoglires</taxon>
        <taxon>Glires</taxon>
        <taxon>Rodentia</taxon>
        <taxon>Myomorpha</taxon>
        <taxon>Muroidea</taxon>
        <taxon>Muridae</taxon>
        <taxon>Murinae</taxon>
        <taxon>Mus</taxon>
        <taxon>Mus</taxon>
    </lineage>
</organism>
<feature type="signal peptide" evidence="2">
    <location>
        <begin position="1"/>
        <end position="25"/>
    </location>
</feature>
<feature type="chain" id="PRO_0000051722" description="Cytochrome P450 2C39" evidence="2">
    <location>
        <begin position="26"/>
        <end position="490"/>
    </location>
</feature>
<feature type="binding site" description="axial binding residue" evidence="1">
    <location>
        <position position="435"/>
    </location>
    <ligand>
        <name>heme</name>
        <dbReference type="ChEBI" id="CHEBI:30413"/>
    </ligand>
    <ligandPart>
        <name>Fe</name>
        <dbReference type="ChEBI" id="CHEBI:18248"/>
    </ligandPart>
</feature>
<feature type="sequence conflict" description="In Ref. 1; AAD13721 and 4; AAI39291/AAI39292." evidence="5" ref="1 4">
    <original>I</original>
    <variation>M</variation>
    <location>
        <position position="47"/>
    </location>
</feature>
<feature type="sequence conflict" description="In Ref. 1; AAD13721 and 4; AAI39291/AAI39292." evidence="5" ref="1 4">
    <original>V</original>
    <variation>F</variation>
    <location>
        <position position="50"/>
    </location>
</feature>
<feature type="sequence conflict" description="In Ref. 1; AAD13721 and 4; AAI39291/AAI39292." evidence="5" ref="1 4">
    <original>S</original>
    <variation>P</variation>
    <location>
        <position position="460"/>
    </location>
</feature>
<sequence>MDLVTFLVLTLSSLILLSLWRQSCGRGSLPPGPTPFPIIGNFLQIDIKNVSQSLTNFSKAYGPVFTLYLGSRPTVVLHGYEAVKEALIDHGEEFSDRGSIPMVEKINNGLGIVFSNGNRWKEIRRFTLTTLRNLGMGKRNIEDRVQEEAQCLVEELRKTKGSPCDPTFILSCAPCNVICSIIFQDRFDYKDKDFLMLMEKLNENVKILSSPWLQVCNNFPLLIDYCPGSHHKVLKNVKYIRSYLLEKIKEHQESLDVTNPRDFIDYYLIKQKQANHIQQAEFSLENLACTINNLFAAGTETTSTTLRYALLLLMKYPDVTAKVQEEIDHVIGRHRSPCMQDRNHMPYTDAMIHEVQRFINLVPNNIPRAVTCDIKFRNYLIPKGTTVVTSLTSVLHDSKEFPNPELFDPGHFLDANGNFKKSDHFMPFSAGKRVCAGEGLARMELFLFLTTILQNFKLKSLVHPKDIDMIPFVNGLIALPPHYQVCIIPR</sequence>
<keyword id="KW-0256">Endoplasmic reticulum</keyword>
<keyword id="KW-0349">Heme</keyword>
<keyword id="KW-0408">Iron</keyword>
<keyword id="KW-0443">Lipid metabolism</keyword>
<keyword id="KW-0472">Membrane</keyword>
<keyword id="KW-0479">Metal-binding</keyword>
<keyword id="KW-0492">Microsome</keyword>
<keyword id="KW-0503">Monooxygenase</keyword>
<keyword id="KW-0560">Oxidoreductase</keyword>
<keyword id="KW-1185">Reference proteome</keyword>
<keyword id="KW-0732">Signal</keyword>
<reference key="1">
    <citation type="journal article" date="1998" name="Arch. Biochem. Biophys.">
        <title>Cloning and expression of murine CYP2Cs and their ability to metabolize arachidonic acid.</title>
        <authorList>
            <person name="Luo G."/>
            <person name="Zeldin D.C."/>
            <person name="Blaisdell J.A."/>
            <person name="Hodgson E."/>
            <person name="Goldstein J.A."/>
        </authorList>
    </citation>
    <scope>NUCLEOTIDE SEQUENCE [MRNA]</scope>
    <scope>FUNCTION</scope>
    <scope>CATALYTIC ACTIVITY</scope>
    <scope>TISSUE SPECIFICITY</scope>
    <scope>PATHWAY</scope>
    <source>
        <strain>CD-1</strain>
    </source>
</reference>
<reference key="2">
    <citation type="journal article" date="2009" name="PLoS Biol.">
        <title>Lineage-specific biology revealed by a finished genome assembly of the mouse.</title>
        <authorList>
            <person name="Church D.M."/>
            <person name="Goodstadt L."/>
            <person name="Hillier L.W."/>
            <person name="Zody M.C."/>
            <person name="Goldstein S."/>
            <person name="She X."/>
            <person name="Bult C.J."/>
            <person name="Agarwala R."/>
            <person name="Cherry J.L."/>
            <person name="DiCuccio M."/>
            <person name="Hlavina W."/>
            <person name="Kapustin Y."/>
            <person name="Meric P."/>
            <person name="Maglott D."/>
            <person name="Birtle Z."/>
            <person name="Marques A.C."/>
            <person name="Graves T."/>
            <person name="Zhou S."/>
            <person name="Teague B."/>
            <person name="Potamousis K."/>
            <person name="Churas C."/>
            <person name="Place M."/>
            <person name="Herschleb J."/>
            <person name="Runnheim R."/>
            <person name="Forrest D."/>
            <person name="Amos-Landgraf J."/>
            <person name="Schwartz D.C."/>
            <person name="Cheng Z."/>
            <person name="Lindblad-Toh K."/>
            <person name="Eichler E.E."/>
            <person name="Ponting C.P."/>
        </authorList>
    </citation>
    <scope>NUCLEOTIDE SEQUENCE [LARGE SCALE GENOMIC DNA]</scope>
    <source>
        <strain>C57BL/6J</strain>
    </source>
</reference>
<reference key="3">
    <citation type="submission" date="2005-07" db="EMBL/GenBank/DDBJ databases">
        <authorList>
            <person name="Mural R.J."/>
            <person name="Adams M.D."/>
            <person name="Myers E.W."/>
            <person name="Smith H.O."/>
            <person name="Venter J.C."/>
        </authorList>
    </citation>
    <scope>NUCLEOTIDE SEQUENCE [LARGE SCALE GENOMIC DNA]</scope>
</reference>
<reference key="4">
    <citation type="journal article" date="2004" name="Genome Res.">
        <title>The status, quality, and expansion of the NIH full-length cDNA project: the Mammalian Gene Collection (MGC).</title>
        <authorList>
            <consortium name="The MGC Project Team"/>
        </authorList>
    </citation>
    <scope>NUCLEOTIDE SEQUENCE [LARGE SCALE MRNA]</scope>
    <source>
        <tissue>Brain</tissue>
    </source>
</reference>
<reference key="5">
    <citation type="journal article" date="2010" name="Cell">
        <title>A tissue-specific atlas of mouse protein phosphorylation and expression.</title>
        <authorList>
            <person name="Huttlin E.L."/>
            <person name="Jedrychowski M.P."/>
            <person name="Elias J.E."/>
            <person name="Goswami T."/>
            <person name="Rad R."/>
            <person name="Beausoleil S.A."/>
            <person name="Villen J."/>
            <person name="Haas W."/>
            <person name="Sowa M.E."/>
            <person name="Gygi S.P."/>
        </authorList>
    </citation>
    <scope>IDENTIFICATION BY MASS SPECTROMETRY [LARGE SCALE ANALYSIS]</scope>
    <source>
        <tissue>Liver</tissue>
    </source>
</reference>
<name>CP239_MOUSE</name>
<gene>
    <name evidence="4 7" type="primary">Cyp2c39</name>
</gene>
<protein>
    <recommendedName>
        <fullName>Cytochrome P450 2C39</fullName>
        <ecNumber evidence="3">1.14.14.1</ecNumber>
    </recommendedName>
    <alternativeName>
        <fullName>CYPIIC39</fullName>
    </alternativeName>
</protein>